<feature type="chain" id="PRO_0000286020" description="Aquaporin PIP2-3">
    <location>
        <begin position="1"/>
        <end position="289"/>
    </location>
</feature>
<feature type="transmembrane region" description="Helical; Name=1" evidence="2">
    <location>
        <begin position="43"/>
        <end position="63"/>
    </location>
</feature>
<feature type="transmembrane region" description="Helical; Name=2" evidence="2">
    <location>
        <begin position="80"/>
        <end position="100"/>
    </location>
</feature>
<feature type="transmembrane region" description="Helical; Name=3" evidence="2">
    <location>
        <begin position="131"/>
        <end position="151"/>
    </location>
</feature>
<feature type="transmembrane region" description="Helical; Name=4" evidence="2">
    <location>
        <begin position="173"/>
        <end position="193"/>
    </location>
</feature>
<feature type="transmembrane region" description="Helical; Name=5" evidence="2">
    <location>
        <begin position="207"/>
        <end position="227"/>
    </location>
</feature>
<feature type="transmembrane region" description="Helical; Name=6" evidence="2">
    <location>
        <begin position="255"/>
        <end position="275"/>
    </location>
</feature>
<feature type="region of interest" description="Disordered" evidence="3">
    <location>
        <begin position="1"/>
        <end position="25"/>
    </location>
</feature>
<feature type="short sequence motif" description="NPA 1" evidence="1">
    <location>
        <begin position="112"/>
        <end position="114"/>
    </location>
</feature>
<feature type="short sequence motif" description="NPA 2" evidence="1">
    <location>
        <begin position="233"/>
        <end position="235"/>
    </location>
</feature>
<keyword id="KW-1003">Cell membrane</keyword>
<keyword id="KW-0472">Membrane</keyword>
<keyword id="KW-1185">Reference proteome</keyword>
<keyword id="KW-0677">Repeat</keyword>
<keyword id="KW-0812">Transmembrane</keyword>
<keyword id="KW-1133">Transmembrane helix</keyword>
<keyword id="KW-0813">Transport</keyword>
<organism>
    <name type="scientific">Zea mays</name>
    <name type="common">Maize</name>
    <dbReference type="NCBI Taxonomy" id="4577"/>
    <lineage>
        <taxon>Eukaryota</taxon>
        <taxon>Viridiplantae</taxon>
        <taxon>Streptophyta</taxon>
        <taxon>Embryophyta</taxon>
        <taxon>Tracheophyta</taxon>
        <taxon>Spermatophyta</taxon>
        <taxon>Magnoliopsida</taxon>
        <taxon>Liliopsida</taxon>
        <taxon>Poales</taxon>
        <taxon>Poaceae</taxon>
        <taxon>PACMAD clade</taxon>
        <taxon>Panicoideae</taxon>
        <taxon>Andropogonodae</taxon>
        <taxon>Andropogoneae</taxon>
        <taxon>Tripsacinae</taxon>
        <taxon>Zea</taxon>
    </lineage>
</organism>
<dbReference type="EMBL" id="AF326493">
    <property type="protein sequence ID" value="AAK26760.1"/>
    <property type="molecule type" value="mRNA"/>
</dbReference>
<dbReference type="RefSeq" id="NP_001105025.1">
    <property type="nucleotide sequence ID" value="NM_001111555.1"/>
</dbReference>
<dbReference type="SMR" id="Q9ATM7"/>
<dbReference type="FunCoup" id="Q9ATM7">
    <property type="interactions" value="312"/>
</dbReference>
<dbReference type="STRING" id="4577.Q9ATM7"/>
<dbReference type="PaxDb" id="4577-GRMZM2G081192_P01"/>
<dbReference type="EnsemblPlants" id="Zm00001eb185300_T001">
    <property type="protein sequence ID" value="Zm00001eb185300_P001"/>
    <property type="gene ID" value="Zm00001eb185300"/>
</dbReference>
<dbReference type="GeneID" id="541889"/>
<dbReference type="Gramene" id="Zm00001eb185300_T001">
    <property type="protein sequence ID" value="Zm00001eb185300_P001"/>
    <property type="gene ID" value="Zm00001eb185300"/>
</dbReference>
<dbReference type="KEGG" id="zma:541889"/>
<dbReference type="MaizeGDB" id="403380"/>
<dbReference type="eggNOG" id="KOG0223">
    <property type="taxonomic scope" value="Eukaryota"/>
</dbReference>
<dbReference type="HOGENOM" id="CLU_020019_3_0_1"/>
<dbReference type="InParanoid" id="Q9ATM7"/>
<dbReference type="OMA" id="QNAYFTK"/>
<dbReference type="OrthoDB" id="3222at2759"/>
<dbReference type="Proteomes" id="UP000007305">
    <property type="component" value="Chromosome 4"/>
</dbReference>
<dbReference type="ExpressionAtlas" id="Q9ATM7">
    <property type="expression patterns" value="baseline and differential"/>
</dbReference>
<dbReference type="GO" id="GO:0016020">
    <property type="term" value="C:membrane"/>
    <property type="evidence" value="ECO:0000304"/>
    <property type="project" value="AgBase"/>
</dbReference>
<dbReference type="GO" id="GO:0005886">
    <property type="term" value="C:plasma membrane"/>
    <property type="evidence" value="ECO:0000318"/>
    <property type="project" value="GO_Central"/>
</dbReference>
<dbReference type="GO" id="GO:0015250">
    <property type="term" value="F:water channel activity"/>
    <property type="evidence" value="ECO:0000318"/>
    <property type="project" value="GO_Central"/>
</dbReference>
<dbReference type="CDD" id="cd00333">
    <property type="entry name" value="MIP"/>
    <property type="match status" value="1"/>
</dbReference>
<dbReference type="FunFam" id="1.20.1080.10:FF:000001">
    <property type="entry name" value="Probable aquaporin PIP1-2"/>
    <property type="match status" value="1"/>
</dbReference>
<dbReference type="Gene3D" id="1.20.1080.10">
    <property type="entry name" value="Glycerol uptake facilitator protein"/>
    <property type="match status" value="1"/>
</dbReference>
<dbReference type="InterPro" id="IPR023271">
    <property type="entry name" value="Aquaporin-like"/>
</dbReference>
<dbReference type="InterPro" id="IPR034294">
    <property type="entry name" value="Aquaporin_transptr"/>
</dbReference>
<dbReference type="InterPro" id="IPR000425">
    <property type="entry name" value="MIP"/>
</dbReference>
<dbReference type="InterPro" id="IPR022357">
    <property type="entry name" value="MIP_CS"/>
</dbReference>
<dbReference type="NCBIfam" id="TIGR00861">
    <property type="entry name" value="MIP"/>
    <property type="match status" value="1"/>
</dbReference>
<dbReference type="PANTHER" id="PTHR45687">
    <property type="entry name" value="AQUAPORIN OR AQUAGLYCEROPORIN RELATED"/>
    <property type="match status" value="1"/>
</dbReference>
<dbReference type="Pfam" id="PF00230">
    <property type="entry name" value="MIP"/>
    <property type="match status" value="1"/>
</dbReference>
<dbReference type="PRINTS" id="PR00783">
    <property type="entry name" value="MINTRINSICP"/>
</dbReference>
<dbReference type="SUPFAM" id="SSF81338">
    <property type="entry name" value="Aquaporin-like"/>
    <property type="match status" value="1"/>
</dbReference>
<dbReference type="PROSITE" id="PS00221">
    <property type="entry name" value="MIP"/>
    <property type="match status" value="1"/>
</dbReference>
<reference key="1">
    <citation type="journal article" date="2001" name="Plant Physiol.">
        <title>Aquaporins constitute a large and highly divergent protein family in maize.</title>
        <authorList>
            <person name="Chaumont F."/>
            <person name="Barrieu F."/>
            <person name="Wojcik E."/>
            <person name="Chrispeels M.J."/>
            <person name="Jung R."/>
        </authorList>
    </citation>
    <scope>NUCLEOTIDE SEQUENCE [MRNA]</scope>
    <scope>GENE FAMILY</scope>
    <scope>NOMENCLATURE</scope>
    <source>
        <strain>cv. B73</strain>
    </source>
</reference>
<gene>
    <name type="primary">PIP2-3</name>
    <name type="synonym">PIP2C</name>
</gene>
<protein>
    <recommendedName>
        <fullName>Aquaporin PIP2-3</fullName>
    </recommendedName>
    <alternativeName>
        <fullName>Plasma membrane intrinsic protein 2-3</fullName>
    </alternativeName>
    <alternativeName>
        <fullName>ZmPIP2-3</fullName>
    </alternativeName>
    <alternativeName>
        <fullName>ZmPIP2;3</fullName>
    </alternativeName>
</protein>
<name>PIP23_MAIZE</name>
<proteinExistence type="evidence at transcript level"/>
<evidence type="ECO:0000250" key="1"/>
<evidence type="ECO:0000255" key="2"/>
<evidence type="ECO:0000256" key="3">
    <source>
        <dbReference type="SAM" id="MobiDB-lite"/>
    </source>
</evidence>
<evidence type="ECO:0000305" key="4"/>
<accession>Q9ATM7</accession>
<sequence length="289" mass="30420">MAKQDIEASGPEAGEFSAKDYTDPPPAPLIDADELTKWSLYRAVIAEFIATLLFLYITVATVIGYKHQTDAAASGPDAACGGVGILGIAWAFGGMIFILVYCTAGISGGHINPAVTFGLFLARKVSLVRALLYIIAQCLGAICGVGLVKGFQSAYYVRYGGGANELSDGYSKGTGLAAEIIGTFVLVYTVFSATDPKRSARDSHVPVLAPLPIGFAVFMVHLATIPITGTGINPARSLGAAVIYNKDKAWDDQWIFWVGPLIGAAIAAAYHQYVLRASATKLGSYRSNA</sequence>
<comment type="function">
    <text evidence="1">Aquaporins facilitate the transport of water and small neutral solutes across cell membranes.</text>
</comment>
<comment type="subcellular location">
    <subcellularLocation>
        <location evidence="1">Cell membrane</location>
        <topology evidence="1">Multi-pass membrane protein</topology>
    </subcellularLocation>
</comment>
<comment type="domain">
    <text>Aquaporins contain two tandem repeats each containing three membrane-spanning domains and a pore-forming loop with the signature motif Asn-Pro-Ala (NPA).</text>
</comment>
<comment type="similarity">
    <text evidence="4">Belongs to the MIP/aquaporin (TC 1.A.8) family. PIP (TC 1.A.8.11) subfamily.</text>
</comment>